<organism>
    <name type="scientific">Escherichia coli O139:H28 (strain E24377A / ETEC)</name>
    <dbReference type="NCBI Taxonomy" id="331111"/>
    <lineage>
        <taxon>Bacteria</taxon>
        <taxon>Pseudomonadati</taxon>
        <taxon>Pseudomonadota</taxon>
        <taxon>Gammaproteobacteria</taxon>
        <taxon>Enterobacterales</taxon>
        <taxon>Enterobacteriaceae</taxon>
        <taxon>Escherichia</taxon>
    </lineage>
</organism>
<comment type="function">
    <text evidence="1">Negatively regulates the transcription of the flagellar master operon flhDC by binding to the upstream region of the operon.</text>
</comment>
<comment type="similarity">
    <text evidence="2">Belongs to the LysR transcriptional regulatory family.</text>
</comment>
<reference key="1">
    <citation type="journal article" date="2008" name="J. Bacteriol.">
        <title>The pangenome structure of Escherichia coli: comparative genomic analysis of E. coli commensal and pathogenic isolates.</title>
        <authorList>
            <person name="Rasko D.A."/>
            <person name="Rosovitz M.J."/>
            <person name="Myers G.S.A."/>
            <person name="Mongodin E.F."/>
            <person name="Fricke W.F."/>
            <person name="Gajer P."/>
            <person name="Crabtree J."/>
            <person name="Sebaihia M."/>
            <person name="Thomson N.R."/>
            <person name="Chaudhuri R."/>
            <person name="Henderson I.R."/>
            <person name="Sperandio V."/>
            <person name="Ravel J."/>
        </authorList>
    </citation>
    <scope>NUCLEOTIDE SEQUENCE [LARGE SCALE GENOMIC DNA]</scope>
    <source>
        <strain>E24377A / ETEC</strain>
    </source>
</reference>
<feature type="chain" id="PRO_1000066892" description="HTH-type transcriptional regulator HdfR">
    <location>
        <begin position="1"/>
        <end position="279"/>
    </location>
</feature>
<feature type="domain" description="HTH lysR-type" evidence="1">
    <location>
        <begin position="1"/>
        <end position="58"/>
    </location>
</feature>
<feature type="DNA-binding region" description="H-T-H motif" evidence="1">
    <location>
        <begin position="18"/>
        <end position="37"/>
    </location>
</feature>
<gene>
    <name evidence="1" type="primary">hdfR</name>
    <name type="ordered locus">EcE24377A_4276</name>
</gene>
<dbReference type="EMBL" id="CP000800">
    <property type="protein sequence ID" value="ABV19238.1"/>
    <property type="molecule type" value="Genomic_DNA"/>
</dbReference>
<dbReference type="RefSeq" id="WP_000379246.1">
    <property type="nucleotide sequence ID" value="NC_009801.1"/>
</dbReference>
<dbReference type="SMR" id="A7ZTW7"/>
<dbReference type="GeneID" id="75204755"/>
<dbReference type="KEGG" id="ecw:EcE24377A_4276"/>
<dbReference type="HOGENOM" id="CLU_039613_8_2_6"/>
<dbReference type="Proteomes" id="UP000001122">
    <property type="component" value="Chromosome"/>
</dbReference>
<dbReference type="GO" id="GO:0003677">
    <property type="term" value="F:DNA binding"/>
    <property type="evidence" value="ECO:0007669"/>
    <property type="project" value="UniProtKB-KW"/>
</dbReference>
<dbReference type="GO" id="GO:0003700">
    <property type="term" value="F:DNA-binding transcription factor activity"/>
    <property type="evidence" value="ECO:0007669"/>
    <property type="project" value="UniProtKB-UniRule"/>
</dbReference>
<dbReference type="GO" id="GO:0045892">
    <property type="term" value="P:negative regulation of DNA-templated transcription"/>
    <property type="evidence" value="ECO:0007669"/>
    <property type="project" value="UniProtKB-UniRule"/>
</dbReference>
<dbReference type="FunFam" id="1.10.10.10:FF:000001">
    <property type="entry name" value="LysR family transcriptional regulator"/>
    <property type="match status" value="1"/>
</dbReference>
<dbReference type="Gene3D" id="3.40.190.10">
    <property type="entry name" value="Periplasmic binding protein-like II"/>
    <property type="match status" value="2"/>
</dbReference>
<dbReference type="Gene3D" id="1.10.10.10">
    <property type="entry name" value="Winged helix-like DNA-binding domain superfamily/Winged helix DNA-binding domain"/>
    <property type="match status" value="1"/>
</dbReference>
<dbReference type="HAMAP" id="MF_01233">
    <property type="entry name" value="HTH_type_HdfR"/>
    <property type="match status" value="1"/>
</dbReference>
<dbReference type="InterPro" id="IPR050176">
    <property type="entry name" value="LTTR"/>
</dbReference>
<dbReference type="InterPro" id="IPR005119">
    <property type="entry name" value="LysR_subst-bd"/>
</dbReference>
<dbReference type="InterPro" id="IPR020890">
    <property type="entry name" value="Tscrpt_reg_HTH_HdfR"/>
</dbReference>
<dbReference type="InterPro" id="IPR000847">
    <property type="entry name" value="Tscrpt_reg_HTH_LysR"/>
</dbReference>
<dbReference type="InterPro" id="IPR036388">
    <property type="entry name" value="WH-like_DNA-bd_sf"/>
</dbReference>
<dbReference type="InterPro" id="IPR036390">
    <property type="entry name" value="WH_DNA-bd_sf"/>
</dbReference>
<dbReference type="NCBIfam" id="NF002946">
    <property type="entry name" value="PRK03601.1"/>
    <property type="match status" value="1"/>
</dbReference>
<dbReference type="PANTHER" id="PTHR30579:SF8">
    <property type="entry name" value="HTH-TYPE TRANSCRIPTIONAL REGULATOR HDFR"/>
    <property type="match status" value="1"/>
</dbReference>
<dbReference type="PANTHER" id="PTHR30579">
    <property type="entry name" value="TRANSCRIPTIONAL REGULATOR"/>
    <property type="match status" value="1"/>
</dbReference>
<dbReference type="Pfam" id="PF00126">
    <property type="entry name" value="HTH_1"/>
    <property type="match status" value="1"/>
</dbReference>
<dbReference type="Pfam" id="PF03466">
    <property type="entry name" value="LysR_substrate"/>
    <property type="match status" value="1"/>
</dbReference>
<dbReference type="PRINTS" id="PR00039">
    <property type="entry name" value="HTHLYSR"/>
</dbReference>
<dbReference type="SUPFAM" id="SSF53850">
    <property type="entry name" value="Periplasmic binding protein-like II"/>
    <property type="match status" value="1"/>
</dbReference>
<dbReference type="SUPFAM" id="SSF46785">
    <property type="entry name" value="Winged helix' DNA-binding domain"/>
    <property type="match status" value="1"/>
</dbReference>
<dbReference type="PROSITE" id="PS50931">
    <property type="entry name" value="HTH_LYSR"/>
    <property type="match status" value="1"/>
</dbReference>
<keyword id="KW-0238">DNA-binding</keyword>
<keyword id="KW-1185">Reference proteome</keyword>
<keyword id="KW-0678">Repressor</keyword>
<keyword id="KW-0804">Transcription</keyword>
<keyword id="KW-0805">Transcription regulation</keyword>
<sequence>MDTELLKTFLEVSRTRHFGRAAESLYLTQSAVSFRIRQLENQLGVNLFTRHRNNIRLTAAGEKLLPYAETLMSTWQAARKEVAHTSRHNEFSIGASASLWECMLNQWLGRLYQNQDAHTGLQFEARIAQRQSLVKQLHERQLDLLITTEAPKMDEFSSQLLGYFTLALYTSAPSKLKGDLNYLRLEWGPDFQQHEAGLIGADEVPILTTSSAELAQQQIAMLNGCTWLPVSWARKKGGLHTVVDSTTLSRPLYAIWLQNSDKNTLIRDLLKINVLDEVY</sequence>
<evidence type="ECO:0000255" key="1">
    <source>
        <dbReference type="HAMAP-Rule" id="MF_01233"/>
    </source>
</evidence>
<evidence type="ECO:0000305" key="2"/>
<protein>
    <recommendedName>
        <fullName evidence="1">HTH-type transcriptional regulator HdfR</fullName>
    </recommendedName>
    <alternativeName>
        <fullName evidence="1">H-NS-dependent flhDC regulator</fullName>
    </alternativeName>
</protein>
<accession>A7ZTW7</accession>
<proteinExistence type="inferred from homology"/>
<name>HDFR_ECO24</name>